<comment type="function">
    <text evidence="1">Catalyzes the condensation of ATP and 5-phosphoribose 1-diphosphate to form N'-(5'-phosphoribosyl)-ATP (PR-ATP). Has a crucial role in the pathway because the rate of histidine biosynthesis seems to be controlled primarily by regulation of HisG enzymatic activity.</text>
</comment>
<comment type="catalytic activity">
    <reaction evidence="1">
        <text>1-(5-phospho-beta-D-ribosyl)-ATP + diphosphate = 5-phospho-alpha-D-ribose 1-diphosphate + ATP</text>
        <dbReference type="Rhea" id="RHEA:18473"/>
        <dbReference type="ChEBI" id="CHEBI:30616"/>
        <dbReference type="ChEBI" id="CHEBI:33019"/>
        <dbReference type="ChEBI" id="CHEBI:58017"/>
        <dbReference type="ChEBI" id="CHEBI:73183"/>
        <dbReference type="EC" id="2.4.2.17"/>
    </reaction>
</comment>
<comment type="cofactor">
    <cofactor evidence="1">
        <name>Mg(2+)</name>
        <dbReference type="ChEBI" id="CHEBI:18420"/>
    </cofactor>
</comment>
<comment type="activity regulation">
    <text evidence="1">Feedback inhibited by histidine.</text>
</comment>
<comment type="pathway">
    <text evidence="1">Amino-acid biosynthesis; L-histidine biosynthesis; L-histidine from 5-phospho-alpha-D-ribose 1-diphosphate: step 1/9.</text>
</comment>
<comment type="subcellular location">
    <subcellularLocation>
        <location evidence="1">Cytoplasm</location>
    </subcellularLocation>
</comment>
<comment type="similarity">
    <text evidence="1">Belongs to the ATP phosphoribosyltransferase family. Long subfamily.</text>
</comment>
<evidence type="ECO:0000255" key="1">
    <source>
        <dbReference type="HAMAP-Rule" id="MF_00079"/>
    </source>
</evidence>
<dbReference type="EC" id="2.4.2.17" evidence="1"/>
<dbReference type="EMBL" id="CP001091">
    <property type="protein sequence ID" value="ACE62758.1"/>
    <property type="molecule type" value="Genomic_DNA"/>
</dbReference>
<dbReference type="RefSeq" id="WP_005599856.1">
    <property type="nucleotide sequence ID" value="NC_010939.1"/>
</dbReference>
<dbReference type="SMR" id="B3GZG5"/>
<dbReference type="GeneID" id="48600321"/>
<dbReference type="KEGG" id="apa:APP7_2106"/>
<dbReference type="HOGENOM" id="CLU_038115_1_0_6"/>
<dbReference type="UniPathway" id="UPA00031">
    <property type="reaction ID" value="UER00006"/>
</dbReference>
<dbReference type="Proteomes" id="UP000001226">
    <property type="component" value="Chromosome"/>
</dbReference>
<dbReference type="GO" id="GO:0005737">
    <property type="term" value="C:cytoplasm"/>
    <property type="evidence" value="ECO:0007669"/>
    <property type="project" value="UniProtKB-SubCell"/>
</dbReference>
<dbReference type="GO" id="GO:0005524">
    <property type="term" value="F:ATP binding"/>
    <property type="evidence" value="ECO:0007669"/>
    <property type="project" value="UniProtKB-KW"/>
</dbReference>
<dbReference type="GO" id="GO:0003879">
    <property type="term" value="F:ATP phosphoribosyltransferase activity"/>
    <property type="evidence" value="ECO:0007669"/>
    <property type="project" value="UniProtKB-UniRule"/>
</dbReference>
<dbReference type="GO" id="GO:0000287">
    <property type="term" value="F:magnesium ion binding"/>
    <property type="evidence" value="ECO:0007669"/>
    <property type="project" value="UniProtKB-UniRule"/>
</dbReference>
<dbReference type="GO" id="GO:0000105">
    <property type="term" value="P:L-histidine biosynthetic process"/>
    <property type="evidence" value="ECO:0007669"/>
    <property type="project" value="UniProtKB-UniRule"/>
</dbReference>
<dbReference type="CDD" id="cd13592">
    <property type="entry name" value="PBP2_HisGL2"/>
    <property type="match status" value="1"/>
</dbReference>
<dbReference type="FunFam" id="3.30.70.120:FF:000002">
    <property type="entry name" value="ATP phosphoribosyltransferase"/>
    <property type="match status" value="1"/>
</dbReference>
<dbReference type="FunFam" id="3.40.190.10:FF:000008">
    <property type="entry name" value="ATP phosphoribosyltransferase"/>
    <property type="match status" value="1"/>
</dbReference>
<dbReference type="Gene3D" id="3.30.70.120">
    <property type="match status" value="1"/>
</dbReference>
<dbReference type="Gene3D" id="3.40.190.10">
    <property type="entry name" value="Periplasmic binding protein-like II"/>
    <property type="match status" value="2"/>
</dbReference>
<dbReference type="HAMAP" id="MF_00079">
    <property type="entry name" value="HisG_Long"/>
    <property type="match status" value="1"/>
</dbReference>
<dbReference type="InterPro" id="IPR020621">
    <property type="entry name" value="ATP-PRT_HisG_long"/>
</dbReference>
<dbReference type="InterPro" id="IPR013820">
    <property type="entry name" value="ATP_PRibTrfase_cat"/>
</dbReference>
<dbReference type="InterPro" id="IPR018198">
    <property type="entry name" value="ATP_PRibTrfase_CS"/>
</dbReference>
<dbReference type="InterPro" id="IPR001348">
    <property type="entry name" value="ATP_PRibTrfase_HisG"/>
</dbReference>
<dbReference type="InterPro" id="IPR013115">
    <property type="entry name" value="HisG_C"/>
</dbReference>
<dbReference type="InterPro" id="IPR011322">
    <property type="entry name" value="N-reg_PII-like_a/b"/>
</dbReference>
<dbReference type="InterPro" id="IPR015867">
    <property type="entry name" value="N-reg_PII/ATP_PRibTrfase_C"/>
</dbReference>
<dbReference type="NCBIfam" id="TIGR00070">
    <property type="entry name" value="hisG"/>
    <property type="match status" value="1"/>
</dbReference>
<dbReference type="NCBIfam" id="TIGR03455">
    <property type="entry name" value="HisG_C-term"/>
    <property type="match status" value="1"/>
</dbReference>
<dbReference type="PANTHER" id="PTHR21403:SF8">
    <property type="entry name" value="ATP PHOSPHORIBOSYLTRANSFERASE"/>
    <property type="match status" value="1"/>
</dbReference>
<dbReference type="PANTHER" id="PTHR21403">
    <property type="entry name" value="ATP PHOSPHORIBOSYLTRANSFERASE ATP-PRTASE"/>
    <property type="match status" value="1"/>
</dbReference>
<dbReference type="Pfam" id="PF01634">
    <property type="entry name" value="HisG"/>
    <property type="match status" value="1"/>
</dbReference>
<dbReference type="Pfam" id="PF08029">
    <property type="entry name" value="HisG_C"/>
    <property type="match status" value="1"/>
</dbReference>
<dbReference type="SUPFAM" id="SSF54913">
    <property type="entry name" value="GlnB-like"/>
    <property type="match status" value="1"/>
</dbReference>
<dbReference type="SUPFAM" id="SSF53850">
    <property type="entry name" value="Periplasmic binding protein-like II"/>
    <property type="match status" value="1"/>
</dbReference>
<dbReference type="PROSITE" id="PS01316">
    <property type="entry name" value="ATP_P_PHORIBOSYLTR"/>
    <property type="match status" value="1"/>
</dbReference>
<proteinExistence type="inferred from homology"/>
<name>HIS1_ACTP7</name>
<sequence>MTTTNRLRIALQKKGRLSKDCNELLKQCGVKINWNEQRLIAYAENMPIEILRVRDDDIPGLVFEGVVDLGIIGENVLEEEELGRLARGEKIEYKKLRTLDFGGCRLSLAIDRDRTYNGVQDFVNSRIATSYPNLLKRYMNEKGVAFKSTLLNGSVEVAPSAGLADAICDLVSSGATLEANGLKEVEVIYQSKACLIQRAEPLSAEKQALVDRLLTRIQGVQQAAESKYIMLHAPKDKLKEITALLPGVENPTILPLANDSARVAMHVVSQENLFWETMEQLKEMGASSVLVLPIEKMLA</sequence>
<protein>
    <recommendedName>
        <fullName evidence="1">ATP phosphoribosyltransferase</fullName>
        <shortName evidence="1">ATP-PRT</shortName>
        <shortName evidence="1">ATP-PRTase</shortName>
        <ecNumber evidence="1">2.4.2.17</ecNumber>
    </recommendedName>
</protein>
<feature type="chain" id="PRO_1000092723" description="ATP phosphoribosyltransferase">
    <location>
        <begin position="1"/>
        <end position="299"/>
    </location>
</feature>
<accession>B3GZG5</accession>
<gene>
    <name evidence="1" type="primary">hisG</name>
    <name type="ordered locus">APP7_2106</name>
</gene>
<reference key="1">
    <citation type="submission" date="2008-06" db="EMBL/GenBank/DDBJ databases">
        <title>Genome and proteome analysis of A. pleuropneumoniae serotype 7.</title>
        <authorList>
            <person name="Linke B."/>
            <person name="Buettner F."/>
            <person name="Martinez-Arias R."/>
            <person name="Goesmann A."/>
            <person name="Baltes N."/>
            <person name="Tegetmeyer H."/>
            <person name="Singh M."/>
            <person name="Gerlach G.F."/>
        </authorList>
    </citation>
    <scope>NUCLEOTIDE SEQUENCE [LARGE SCALE GENOMIC DNA]</scope>
    <source>
        <strain>AP76</strain>
    </source>
</reference>
<organism>
    <name type="scientific">Actinobacillus pleuropneumoniae serotype 7 (strain AP76)</name>
    <dbReference type="NCBI Taxonomy" id="537457"/>
    <lineage>
        <taxon>Bacteria</taxon>
        <taxon>Pseudomonadati</taxon>
        <taxon>Pseudomonadota</taxon>
        <taxon>Gammaproteobacteria</taxon>
        <taxon>Pasteurellales</taxon>
        <taxon>Pasteurellaceae</taxon>
        <taxon>Actinobacillus</taxon>
    </lineage>
</organism>
<keyword id="KW-0028">Amino-acid biosynthesis</keyword>
<keyword id="KW-0067">ATP-binding</keyword>
<keyword id="KW-0963">Cytoplasm</keyword>
<keyword id="KW-0328">Glycosyltransferase</keyword>
<keyword id="KW-0368">Histidine biosynthesis</keyword>
<keyword id="KW-0460">Magnesium</keyword>
<keyword id="KW-0479">Metal-binding</keyword>
<keyword id="KW-0547">Nucleotide-binding</keyword>
<keyword id="KW-0808">Transferase</keyword>